<dbReference type="EMBL" id="CR382133">
    <property type="protein sequence ID" value="CAG84363.1"/>
    <property type="molecule type" value="Genomic_DNA"/>
</dbReference>
<dbReference type="RefSeq" id="XP_456411.1">
    <property type="nucleotide sequence ID" value="XM_456411.1"/>
</dbReference>
<dbReference type="SMR" id="Q6BZF8"/>
<dbReference type="FunCoup" id="Q6BZF8">
    <property type="interactions" value="701"/>
</dbReference>
<dbReference type="STRING" id="284592.Q6BZF8"/>
<dbReference type="GeneID" id="2899968"/>
<dbReference type="KEGG" id="dha:DEHA2A01672g"/>
<dbReference type="VEuPathDB" id="FungiDB:DEHA2A01672g"/>
<dbReference type="eggNOG" id="KOG3430">
    <property type="taxonomic scope" value="Eukaryota"/>
</dbReference>
<dbReference type="HOGENOM" id="CLU_070944_4_0_1"/>
<dbReference type="InParanoid" id="Q6BZF8"/>
<dbReference type="OMA" id="THEKGHF"/>
<dbReference type="OrthoDB" id="10033309at2759"/>
<dbReference type="Proteomes" id="UP000000599">
    <property type="component" value="Chromosome A"/>
</dbReference>
<dbReference type="GO" id="GO:0005868">
    <property type="term" value="C:cytoplasmic dynein complex"/>
    <property type="evidence" value="ECO:0007669"/>
    <property type="project" value="EnsemblFungi"/>
</dbReference>
<dbReference type="GO" id="GO:0005881">
    <property type="term" value="C:cytoplasmic microtubule"/>
    <property type="evidence" value="ECO:0007669"/>
    <property type="project" value="EnsemblFungi"/>
</dbReference>
<dbReference type="GO" id="GO:0035974">
    <property type="term" value="C:meiotic spindle pole body"/>
    <property type="evidence" value="ECO:0007669"/>
    <property type="project" value="EnsemblFungi"/>
</dbReference>
<dbReference type="GO" id="GO:0034399">
    <property type="term" value="C:nuclear periphery"/>
    <property type="evidence" value="ECO:0007669"/>
    <property type="project" value="EnsemblFungi"/>
</dbReference>
<dbReference type="GO" id="GO:0005643">
    <property type="term" value="C:nuclear pore"/>
    <property type="evidence" value="ECO:0007669"/>
    <property type="project" value="UniProtKB-SubCell"/>
</dbReference>
<dbReference type="GO" id="GO:1990429">
    <property type="term" value="C:peroxisomal importomer complex"/>
    <property type="evidence" value="ECO:0007669"/>
    <property type="project" value="EnsemblFungi"/>
</dbReference>
<dbReference type="GO" id="GO:0045505">
    <property type="term" value="F:dynein intermediate chain binding"/>
    <property type="evidence" value="ECO:0007669"/>
    <property type="project" value="TreeGrafter"/>
</dbReference>
<dbReference type="GO" id="GO:0008574">
    <property type="term" value="F:plus-end-directed microtubule motor activity"/>
    <property type="evidence" value="ECO:0007669"/>
    <property type="project" value="EnsemblFungi"/>
</dbReference>
<dbReference type="GO" id="GO:0040001">
    <property type="term" value="P:establishment of mitotic spindle localization"/>
    <property type="evidence" value="ECO:0007669"/>
    <property type="project" value="EnsemblFungi"/>
</dbReference>
<dbReference type="GO" id="GO:0051028">
    <property type="term" value="P:mRNA transport"/>
    <property type="evidence" value="ECO:0007669"/>
    <property type="project" value="UniProtKB-KW"/>
</dbReference>
<dbReference type="GO" id="GO:0030473">
    <property type="term" value="P:nuclear migration along microtubule"/>
    <property type="evidence" value="ECO:0007669"/>
    <property type="project" value="EnsemblFungi"/>
</dbReference>
<dbReference type="GO" id="GO:0051292">
    <property type="term" value="P:nuclear pore complex assembly"/>
    <property type="evidence" value="ECO:0007669"/>
    <property type="project" value="EnsemblFungi"/>
</dbReference>
<dbReference type="GO" id="GO:0015031">
    <property type="term" value="P:protein transport"/>
    <property type="evidence" value="ECO:0007669"/>
    <property type="project" value="UniProtKB-KW"/>
</dbReference>
<dbReference type="CDD" id="cd21452">
    <property type="entry name" value="DLC-like_DYNLL1_DYNLL2"/>
    <property type="match status" value="1"/>
</dbReference>
<dbReference type="FunFam" id="3.30.740.10:FF:000005">
    <property type="entry name" value="Dynein light chain"/>
    <property type="match status" value="1"/>
</dbReference>
<dbReference type="Gene3D" id="3.30.740.10">
    <property type="entry name" value="Protein Inhibitor Of Neuronal Nitric Oxide Synthase"/>
    <property type="match status" value="1"/>
</dbReference>
<dbReference type="InterPro" id="IPR037177">
    <property type="entry name" value="DLC_sf"/>
</dbReference>
<dbReference type="InterPro" id="IPR019763">
    <property type="entry name" value="Dynein_light_1/2_CS"/>
</dbReference>
<dbReference type="InterPro" id="IPR001372">
    <property type="entry name" value="Dynein_light_chain_typ-1/2"/>
</dbReference>
<dbReference type="PANTHER" id="PTHR11886">
    <property type="entry name" value="DYNEIN LIGHT CHAIN"/>
    <property type="match status" value="1"/>
</dbReference>
<dbReference type="PANTHER" id="PTHR11886:SF35">
    <property type="entry name" value="DYNEIN LIGHT CHAIN"/>
    <property type="match status" value="1"/>
</dbReference>
<dbReference type="Pfam" id="PF01221">
    <property type="entry name" value="Dynein_light"/>
    <property type="match status" value="1"/>
</dbReference>
<dbReference type="SMART" id="SM01375">
    <property type="entry name" value="Dynein_light"/>
    <property type="match status" value="1"/>
</dbReference>
<dbReference type="SUPFAM" id="SSF54648">
    <property type="entry name" value="DLC"/>
    <property type="match status" value="1"/>
</dbReference>
<dbReference type="PROSITE" id="PS01239">
    <property type="entry name" value="DYNEIN_LIGHT_1"/>
    <property type="match status" value="1"/>
</dbReference>
<protein>
    <recommendedName>
        <fullName>Dynein light chain 1, cytoplasmic</fullName>
    </recommendedName>
</protein>
<reference key="1">
    <citation type="journal article" date="2004" name="Nature">
        <title>Genome evolution in yeasts.</title>
        <authorList>
            <person name="Dujon B."/>
            <person name="Sherman D."/>
            <person name="Fischer G."/>
            <person name="Durrens P."/>
            <person name="Casaregola S."/>
            <person name="Lafontaine I."/>
            <person name="de Montigny J."/>
            <person name="Marck C."/>
            <person name="Neuveglise C."/>
            <person name="Talla E."/>
            <person name="Goffard N."/>
            <person name="Frangeul L."/>
            <person name="Aigle M."/>
            <person name="Anthouard V."/>
            <person name="Babour A."/>
            <person name="Barbe V."/>
            <person name="Barnay S."/>
            <person name="Blanchin S."/>
            <person name="Beckerich J.-M."/>
            <person name="Beyne E."/>
            <person name="Bleykasten C."/>
            <person name="Boisrame A."/>
            <person name="Boyer J."/>
            <person name="Cattolico L."/>
            <person name="Confanioleri F."/>
            <person name="de Daruvar A."/>
            <person name="Despons L."/>
            <person name="Fabre E."/>
            <person name="Fairhead C."/>
            <person name="Ferry-Dumazet H."/>
            <person name="Groppi A."/>
            <person name="Hantraye F."/>
            <person name="Hennequin C."/>
            <person name="Jauniaux N."/>
            <person name="Joyet P."/>
            <person name="Kachouri R."/>
            <person name="Kerrest A."/>
            <person name="Koszul R."/>
            <person name="Lemaire M."/>
            <person name="Lesur I."/>
            <person name="Ma L."/>
            <person name="Muller H."/>
            <person name="Nicaud J.-M."/>
            <person name="Nikolski M."/>
            <person name="Oztas S."/>
            <person name="Ozier-Kalogeropoulos O."/>
            <person name="Pellenz S."/>
            <person name="Potier S."/>
            <person name="Richard G.-F."/>
            <person name="Straub M.-L."/>
            <person name="Suleau A."/>
            <person name="Swennen D."/>
            <person name="Tekaia F."/>
            <person name="Wesolowski-Louvel M."/>
            <person name="Westhof E."/>
            <person name="Wirth B."/>
            <person name="Zeniou-Meyer M."/>
            <person name="Zivanovic Y."/>
            <person name="Bolotin-Fukuhara M."/>
            <person name="Thierry A."/>
            <person name="Bouchier C."/>
            <person name="Caudron B."/>
            <person name="Scarpelli C."/>
            <person name="Gaillardin C."/>
            <person name="Weissenbach J."/>
            <person name="Wincker P."/>
            <person name="Souciet J.-L."/>
        </authorList>
    </citation>
    <scope>NUCLEOTIDE SEQUENCE [LARGE SCALE GENOMIC DNA]</scope>
    <source>
        <strain>ATCC 36239 / CBS 767 / BCRC 21394 / JCM 1990 / NBRC 0083 / IGC 2968</strain>
    </source>
</reference>
<evidence type="ECO:0000250" key="1"/>
<evidence type="ECO:0000250" key="2">
    <source>
        <dbReference type="UniProtKB" id="Q02647"/>
    </source>
</evidence>
<evidence type="ECO:0000305" key="3"/>
<feature type="chain" id="PRO_0000195145" description="Dynein light chain 1, cytoplasmic">
    <location>
        <begin position="1"/>
        <end position="91"/>
    </location>
</feature>
<name>DYL1_DEBHA</name>
<accession>Q6BZF8</accession>
<comment type="function">
    <text evidence="1 2">Acts as one of several non-catalytic accessory components of the cytoplasmic dynein complex that are thought to be involved in linking dynein to cargos and to adapter proteins that regulate dynein function. Cytoplasmic dynein 1 acts as a motor for the intracellular retrograde motility of vesicles and organelles along microtubules. May play a role in changing or maintaining the spatial distribution of cytoskeletal structures (By similarity). Also a component of the nuclear pore complex (By similarity).</text>
</comment>
<comment type="subunit">
    <text evidence="2">Homodimer. Cytoplasmic dynein consists of two catalytic heavy chains (HCs) and a number of non-catalytic subunits which present intermediate chains (ICs), light intermediate chains (LICs) and light chains (LCs). Component of the nuclear pore complex (NPC). NPC constitutes the exclusive means of nucleocytoplasmic transport. NPCs allow the passive diffusion of ions and small molecules and the active, nuclear transport receptor-mediated bidirectional transport of macromolecules such as proteins, RNAs, ribonucleoparticles (RNPs), and ribosomal subunits across the nuclear envelope. Due to its 8-fold rotational symmetry, all subunits are present with 8 copies or multiples thereof.</text>
</comment>
<comment type="subcellular location">
    <subcellularLocation>
        <location evidence="2">Cytoplasm</location>
        <location evidence="2">Cytoskeleton</location>
    </subcellularLocation>
    <subcellularLocation>
        <location evidence="2">Nucleus</location>
        <location evidence="2">Nuclear pore complex</location>
    </subcellularLocation>
</comment>
<comment type="similarity">
    <text evidence="3">Belongs to the dynein light chain family.</text>
</comment>
<sequence length="91" mass="10538">MSEKEQEPILKASDLPEEMQTRIFELSNEAVSNYKIEKDIATYLKKELDQLYGATWHVIVGKSFGSYVTHEQGFFTYFYIGQLAFLIFKSG</sequence>
<organism>
    <name type="scientific">Debaryomyces hansenii (strain ATCC 36239 / CBS 767 / BCRC 21394 / JCM 1990 / NBRC 0083 / IGC 2968)</name>
    <name type="common">Yeast</name>
    <name type="synonym">Torulaspora hansenii</name>
    <dbReference type="NCBI Taxonomy" id="284592"/>
    <lineage>
        <taxon>Eukaryota</taxon>
        <taxon>Fungi</taxon>
        <taxon>Dikarya</taxon>
        <taxon>Ascomycota</taxon>
        <taxon>Saccharomycotina</taxon>
        <taxon>Pichiomycetes</taxon>
        <taxon>Debaryomycetaceae</taxon>
        <taxon>Debaryomyces</taxon>
    </lineage>
</organism>
<proteinExistence type="inferred from homology"/>
<keyword id="KW-0963">Cytoplasm</keyword>
<keyword id="KW-0206">Cytoskeleton</keyword>
<keyword id="KW-0243">Dynein</keyword>
<keyword id="KW-0493">Microtubule</keyword>
<keyword id="KW-0505">Motor protein</keyword>
<keyword id="KW-0509">mRNA transport</keyword>
<keyword id="KW-0906">Nuclear pore complex</keyword>
<keyword id="KW-0539">Nucleus</keyword>
<keyword id="KW-0653">Protein transport</keyword>
<keyword id="KW-1185">Reference proteome</keyword>
<keyword id="KW-0811">Translocation</keyword>
<keyword id="KW-0813">Transport</keyword>
<gene>
    <name type="primary">DYN2</name>
    <name type="ordered locus">DEHA2A01672g</name>
</gene>